<comment type="function">
    <text evidence="1">Part of the ABC transporter complex CcmAB involved in the biogenesis of c-type cytochromes; once thought to export heme, this seems not to be the case, but its exact role is uncertain. Responsible for energy coupling to the transport system.</text>
</comment>
<comment type="catalytic activity">
    <reaction evidence="1">
        <text>heme b(in) + ATP + H2O = heme b(out) + ADP + phosphate + H(+)</text>
        <dbReference type="Rhea" id="RHEA:19261"/>
        <dbReference type="ChEBI" id="CHEBI:15377"/>
        <dbReference type="ChEBI" id="CHEBI:15378"/>
        <dbReference type="ChEBI" id="CHEBI:30616"/>
        <dbReference type="ChEBI" id="CHEBI:43474"/>
        <dbReference type="ChEBI" id="CHEBI:60344"/>
        <dbReference type="ChEBI" id="CHEBI:456216"/>
        <dbReference type="EC" id="7.6.2.5"/>
    </reaction>
</comment>
<comment type="subunit">
    <text evidence="1">The complex is composed of two ATP-binding proteins (CcmA) and two transmembrane proteins (CcmB).</text>
</comment>
<comment type="subcellular location">
    <subcellularLocation>
        <location evidence="1">Cell inner membrane</location>
        <topology evidence="1">Peripheral membrane protein</topology>
    </subcellularLocation>
</comment>
<comment type="similarity">
    <text evidence="1">Belongs to the ABC transporter superfamily. CcmA exporter (TC 3.A.1.107) family.</text>
</comment>
<keyword id="KW-0067">ATP-binding</keyword>
<keyword id="KW-0997">Cell inner membrane</keyword>
<keyword id="KW-1003">Cell membrane</keyword>
<keyword id="KW-0201">Cytochrome c-type biogenesis</keyword>
<keyword id="KW-0472">Membrane</keyword>
<keyword id="KW-0547">Nucleotide-binding</keyword>
<keyword id="KW-1278">Translocase</keyword>
<keyword id="KW-0813">Transport</keyword>
<sequence length="218" mass="23946">MLEAKNLTCIRDDRCLFQQLSFCIAPGEIVQIEGPNGAGKTSLLRILAGLAEADEGQVNWRDKNIRRDRAKYHQDLLFLGHQPGIKSVLTPFENLLFYQSVFQKVDSAAIWQALAQVGLVGYEDLPVSQLSAGQQRRVALARLWLSPAPLWILDEPLTAIDKQGVSTLLALFVQHAAKGGMVLLTTHQDLGAVSHNVRKICLANTQEKSCLSACCAVN</sequence>
<accession>Q1CHI9</accession>
<accession>C4GU94</accession>
<gene>
    <name evidence="1" type="primary">ccmA</name>
    <name type="ordered locus">YPN_2213</name>
    <name type="ORF">YP516_2478</name>
</gene>
<protein>
    <recommendedName>
        <fullName evidence="1">Cytochrome c biogenesis ATP-binding export protein CcmA</fullName>
        <ecNumber evidence="1">7.6.2.5</ecNumber>
    </recommendedName>
    <alternativeName>
        <fullName evidence="1">Heme exporter protein A</fullName>
    </alternativeName>
</protein>
<name>CCMA_YERPN</name>
<feature type="chain" id="PRO_0000271971" description="Cytochrome c biogenesis ATP-binding export protein CcmA">
    <location>
        <begin position="1"/>
        <end position="218"/>
    </location>
</feature>
<feature type="domain" description="ABC transporter" evidence="1">
    <location>
        <begin position="2"/>
        <end position="217"/>
    </location>
</feature>
<feature type="binding site" evidence="1">
    <location>
        <begin position="34"/>
        <end position="41"/>
    </location>
    <ligand>
        <name>ATP</name>
        <dbReference type="ChEBI" id="CHEBI:30616"/>
    </ligand>
</feature>
<reference key="1">
    <citation type="journal article" date="2006" name="J. Bacteriol.">
        <title>Complete genome sequence of Yersinia pestis strains Antiqua and Nepal516: evidence of gene reduction in an emerging pathogen.</title>
        <authorList>
            <person name="Chain P.S.G."/>
            <person name="Hu P."/>
            <person name="Malfatti S.A."/>
            <person name="Radnedge L."/>
            <person name="Larimer F."/>
            <person name="Vergez L.M."/>
            <person name="Worsham P."/>
            <person name="Chu M.C."/>
            <person name="Andersen G.L."/>
        </authorList>
    </citation>
    <scope>NUCLEOTIDE SEQUENCE [LARGE SCALE GENOMIC DNA]</scope>
    <source>
        <strain>Nepal516</strain>
    </source>
</reference>
<reference key="2">
    <citation type="submission" date="2009-04" db="EMBL/GenBank/DDBJ databases">
        <title>Yersinia pestis Nepal516A whole genome shotgun sequencing project.</title>
        <authorList>
            <person name="Plunkett G. III"/>
            <person name="Anderson B.D."/>
            <person name="Baumler D.J."/>
            <person name="Burland V."/>
            <person name="Cabot E.L."/>
            <person name="Glasner J.D."/>
            <person name="Mau B."/>
            <person name="Neeno-Eckwall E."/>
            <person name="Perna N.T."/>
            <person name="Munk A.C."/>
            <person name="Tapia R."/>
            <person name="Green L.D."/>
            <person name="Rogers Y.C."/>
            <person name="Detter J.C."/>
            <person name="Bruce D.C."/>
            <person name="Brettin T.S."/>
        </authorList>
    </citation>
    <scope>NUCLEOTIDE SEQUENCE [LARGE SCALE GENOMIC DNA]</scope>
    <source>
        <strain>Nepal516</strain>
    </source>
</reference>
<dbReference type="EC" id="7.6.2.5" evidence="1"/>
<dbReference type="EMBL" id="CP000305">
    <property type="protein sequence ID" value="ABG18541.1"/>
    <property type="molecule type" value="Genomic_DNA"/>
</dbReference>
<dbReference type="EMBL" id="ACNQ01000013">
    <property type="protein sequence ID" value="EEO76281.1"/>
    <property type="molecule type" value="Genomic_DNA"/>
</dbReference>
<dbReference type="RefSeq" id="WP_002209693.1">
    <property type="nucleotide sequence ID" value="NZ_ACNQ01000013.1"/>
</dbReference>
<dbReference type="SMR" id="Q1CHI9"/>
<dbReference type="GeneID" id="57975955"/>
<dbReference type="KEGG" id="ypn:YPN_2213"/>
<dbReference type="HOGENOM" id="CLU_000604_1_2_6"/>
<dbReference type="Proteomes" id="UP000008936">
    <property type="component" value="Chromosome"/>
</dbReference>
<dbReference type="GO" id="GO:0005886">
    <property type="term" value="C:plasma membrane"/>
    <property type="evidence" value="ECO:0007669"/>
    <property type="project" value="UniProtKB-SubCell"/>
</dbReference>
<dbReference type="GO" id="GO:0015439">
    <property type="term" value="F:ABC-type heme transporter activity"/>
    <property type="evidence" value="ECO:0007669"/>
    <property type="project" value="UniProtKB-EC"/>
</dbReference>
<dbReference type="GO" id="GO:0005524">
    <property type="term" value="F:ATP binding"/>
    <property type="evidence" value="ECO:0007669"/>
    <property type="project" value="UniProtKB-KW"/>
</dbReference>
<dbReference type="GO" id="GO:0016887">
    <property type="term" value="F:ATP hydrolysis activity"/>
    <property type="evidence" value="ECO:0007669"/>
    <property type="project" value="InterPro"/>
</dbReference>
<dbReference type="GO" id="GO:0017004">
    <property type="term" value="P:cytochrome complex assembly"/>
    <property type="evidence" value="ECO:0007669"/>
    <property type="project" value="UniProtKB-KW"/>
</dbReference>
<dbReference type="CDD" id="cd03231">
    <property type="entry name" value="ABC_CcmA_heme_exporter"/>
    <property type="match status" value="1"/>
</dbReference>
<dbReference type="Gene3D" id="3.40.50.300">
    <property type="entry name" value="P-loop containing nucleotide triphosphate hydrolases"/>
    <property type="match status" value="1"/>
</dbReference>
<dbReference type="InterPro" id="IPR003593">
    <property type="entry name" value="AAA+_ATPase"/>
</dbReference>
<dbReference type="InterPro" id="IPR003439">
    <property type="entry name" value="ABC_transporter-like_ATP-bd"/>
</dbReference>
<dbReference type="InterPro" id="IPR017871">
    <property type="entry name" value="ABC_transporter-like_CS"/>
</dbReference>
<dbReference type="InterPro" id="IPR005895">
    <property type="entry name" value="ABC_transptr_haem_export_CcmA"/>
</dbReference>
<dbReference type="InterPro" id="IPR027417">
    <property type="entry name" value="P-loop_NTPase"/>
</dbReference>
<dbReference type="NCBIfam" id="TIGR01189">
    <property type="entry name" value="ccmA"/>
    <property type="match status" value="1"/>
</dbReference>
<dbReference type="NCBIfam" id="NF010061">
    <property type="entry name" value="PRK13538.1"/>
    <property type="match status" value="1"/>
</dbReference>
<dbReference type="PANTHER" id="PTHR43499">
    <property type="entry name" value="ABC TRANSPORTER I FAMILY MEMBER 1"/>
    <property type="match status" value="1"/>
</dbReference>
<dbReference type="PANTHER" id="PTHR43499:SF1">
    <property type="entry name" value="ABC TRANSPORTER I FAMILY MEMBER 1"/>
    <property type="match status" value="1"/>
</dbReference>
<dbReference type="Pfam" id="PF00005">
    <property type="entry name" value="ABC_tran"/>
    <property type="match status" value="1"/>
</dbReference>
<dbReference type="SMART" id="SM00382">
    <property type="entry name" value="AAA"/>
    <property type="match status" value="1"/>
</dbReference>
<dbReference type="SUPFAM" id="SSF52540">
    <property type="entry name" value="P-loop containing nucleoside triphosphate hydrolases"/>
    <property type="match status" value="1"/>
</dbReference>
<dbReference type="PROSITE" id="PS00211">
    <property type="entry name" value="ABC_TRANSPORTER_1"/>
    <property type="match status" value="1"/>
</dbReference>
<dbReference type="PROSITE" id="PS50893">
    <property type="entry name" value="ABC_TRANSPORTER_2"/>
    <property type="match status" value="1"/>
</dbReference>
<dbReference type="PROSITE" id="PS51243">
    <property type="entry name" value="CCMA"/>
    <property type="match status" value="1"/>
</dbReference>
<evidence type="ECO:0000255" key="1">
    <source>
        <dbReference type="HAMAP-Rule" id="MF_01707"/>
    </source>
</evidence>
<organism>
    <name type="scientific">Yersinia pestis bv. Antiqua (strain Nepal516)</name>
    <dbReference type="NCBI Taxonomy" id="377628"/>
    <lineage>
        <taxon>Bacteria</taxon>
        <taxon>Pseudomonadati</taxon>
        <taxon>Pseudomonadota</taxon>
        <taxon>Gammaproteobacteria</taxon>
        <taxon>Enterobacterales</taxon>
        <taxon>Yersiniaceae</taxon>
        <taxon>Yersinia</taxon>
    </lineage>
</organism>
<proteinExistence type="inferred from homology"/>